<protein>
    <recommendedName>
        <fullName>RNA polymerase-associated transcription-specificity factor RAP94</fullName>
    </recommendedName>
    <alternativeName>
        <fullName>Protein H4</fullName>
    </alternativeName>
    <alternativeName>
        <fullName>RPO-associated protein of 94 kDa</fullName>
    </alternativeName>
</protein>
<organismHost>
    <name type="scientific">Homo sapiens</name>
    <name type="common">Human</name>
    <dbReference type="NCBI Taxonomy" id="9606"/>
</organismHost>
<accession>P0DSR3</accession>
<accession>P33067</accession>
<gene>
    <name type="primary">OPG109</name>
    <name type="synonym">RAP94</name>
    <name type="ORF">H4L</name>
</gene>
<keyword id="KW-0426">Late protein</keyword>
<keyword id="KW-1185">Reference proteome</keyword>
<keyword id="KW-0804">Transcription</keyword>
<keyword id="KW-0805">Transcription regulation</keyword>
<keyword id="KW-0806">Transcription termination</keyword>
<keyword id="KW-0946">Virion</keyword>
<reference key="1">
    <citation type="journal article" date="1993" name="Virus Res.">
        <title>Nucleotide sequence analysis of variola virus HindIII M, L, I genome fragments.</title>
        <authorList>
            <person name="Shchelkunov S.N."/>
            <person name="Blinov V.M."/>
            <person name="Totmenin A.V."/>
            <person name="Marennikova S.S."/>
            <person name="Kolykhalov A.A."/>
            <person name="Frolov I.V."/>
            <person name="Chizhikov V.E."/>
            <person name="Gytorov V.V."/>
            <person name="Gashikov P.V."/>
            <person name="Belanov E.F."/>
            <person name="Belavin P.A."/>
            <person name="Resenchuk S.M."/>
            <person name="Andzhaparidze O.G."/>
            <person name="Sandakhchiev L.S."/>
        </authorList>
    </citation>
    <scope>NUCLEOTIDE SEQUENCE [GENOMIC DNA]</scope>
</reference>
<reference key="2">
    <citation type="journal article" date="1993" name="FEBS Lett.">
        <title>Genes of variola and vaccinia viruses necessary to overcome the host protective mechanisms.</title>
        <authorList>
            <person name="Shchelkunov S.N."/>
            <person name="Blinov V.M."/>
            <person name="Sandakhchiev L.S."/>
        </authorList>
    </citation>
    <scope>NUCLEOTIDE SEQUENCE [LARGE SCALE GENOMIC DNA]</scope>
</reference>
<dbReference type="EMBL" id="X67119">
    <property type="protein sequence ID" value="CAA47586.1"/>
    <property type="molecule type" value="Genomic_DNA"/>
</dbReference>
<dbReference type="EMBL" id="S55844">
    <property type="protein sequence ID" value="AAB24683.1"/>
    <property type="molecule type" value="Genomic_DNA"/>
</dbReference>
<dbReference type="EMBL" id="X69198">
    <property type="protein sequence ID" value="CAA49028.1"/>
    <property type="molecule type" value="Genomic_DNA"/>
</dbReference>
<dbReference type="PIR" id="S33101">
    <property type="entry name" value="S33101"/>
</dbReference>
<dbReference type="SMR" id="P0DSR3"/>
<dbReference type="KEGG" id="vg:1486442"/>
<dbReference type="Proteomes" id="UP000002060">
    <property type="component" value="Segment"/>
</dbReference>
<dbReference type="GO" id="GO:0044423">
    <property type="term" value="C:virion component"/>
    <property type="evidence" value="ECO:0007669"/>
    <property type="project" value="UniProtKB-KW"/>
</dbReference>
<dbReference type="GO" id="GO:0003700">
    <property type="term" value="F:DNA-binding transcription factor activity"/>
    <property type="evidence" value="ECO:0007669"/>
    <property type="project" value="InterPro"/>
</dbReference>
<dbReference type="GO" id="GO:0006353">
    <property type="term" value="P:DNA-templated transcription termination"/>
    <property type="evidence" value="ECO:0007669"/>
    <property type="project" value="UniProtKB-KW"/>
</dbReference>
<dbReference type="InterPro" id="IPR004974">
    <property type="entry name" value="Pox_Rap94"/>
</dbReference>
<dbReference type="Pfam" id="PF03294">
    <property type="entry name" value="Pox_Rap94"/>
    <property type="match status" value="1"/>
</dbReference>
<name>RAP94_VAR67</name>
<evidence type="ECO:0000250" key="1"/>
<evidence type="ECO:0000250" key="2">
    <source>
        <dbReference type="UniProtKB" id="P68438"/>
    </source>
</evidence>
<evidence type="ECO:0000305" key="3"/>
<sequence length="795" mass="93661">MDSKETILIEIIPKIKAYLLDANISPKSYDDFISRNKNIFVINLYNVSAITEEDIRLLYTTIEQNIDANDQTLVAIFSYIGYKFEQTVKEEISTSLSLNDKNTTDEMTYNLYDLFFNTLDMYLRQKKISILVNDDVRGDVIVSYKNSDLVSSFNAELEPEIKKIPFNMKNLLPYLEKNLDQLRFSKKYLDFAYLCRHIGIPISKKKYNVRYVFLYKIDGLSIPIIIKDFLDVKYVYLENTGKIYKNSFSEDHNNSLSDWGKVIIPLLKDRHLYSYIFLSSYHLHSYYTDLIAKDEPVFIKRKKLDIIEIDEPEAWKRDVKVEFAPCEHQIRLKEAMKVDANYFTKINNFANEFIYYEDGVAYCRVCGINIPIFNLDAADVIKNTVIVSTFNKTIFLSEPYSYFVHSQRFIFNIIMSFDNIMKSQTWVMKYNINRLILNFFIDINSRRQEYEKKFSSEIKRGLFFLRLSANLFESQVSSTELFYVSKMLNLNYIVALVIILNSSADFIVSYMKSKNKTVEESTLKYAISVVIYDFLVKTRICEKGSLDTIVLFTDVYTSIMPEELDLHFQRITLELRKLVSIQRSALEPNYDVESRGEELPLSTLKFFDTSTIIVKTMAPVHTYVEQKIVAPTPSVEPTDASLKQFKELTCDEDIKILIRVHDTNATKLVIFPSHLKIEIERKKLIIPLKSLYITNTLKYYYSNSYLYIFRFGDPMPFEEELIDHEHAQYKINCYNILRYHLLPDSDVFVYFSNSLNREALEYAFYIFLSKYVNVKQWIDENITRIRELYMINFNN</sequence>
<proteinExistence type="evidence at transcript level"/>
<feature type="chain" id="PRO_0000099122" description="RNA polymerase-associated transcription-specificity factor RAP94">
    <location>
        <begin position="1"/>
        <end position="795"/>
    </location>
</feature>
<feature type="region of interest" description="Interaction with NPH-I; required for transcription termination" evidence="1">
    <location>
        <begin position="1"/>
        <end position="196"/>
    </location>
</feature>
<feature type="region of interest" description="Interaction with J3" evidence="1">
    <location>
        <begin position="235"/>
        <end position="256"/>
    </location>
</feature>
<comment type="function">
    <text evidence="2">DNA-directed RNA polymerase-associated factor required for the transcription of viral early genes as well as for transcription termination. Within minutes after virus entry, recruits the core RNA polymerase, the early transcription factor (ETF) and other enzymes needed for transcription initiation, elongation, and termination thereby allowing synthesis of early mRNAs which are extruded through pores in the core particle. Recruits the multifunctional OPG102 protein, with poly(A) polymerase-stimulatory, cap nucleoside-2'-O-methyltransferase, and transcription elongation activities. Interacts with nucleoside triphosphatase I/OPG123, a DNA-dependent ATPase required for the termination of early transcripts. Acts as a transcription termination factor by binding, together with the capping enzyme/VTF, to the termination motif 5'-UUUUUNU-3' in the nascent mRNA. Involved as well in the packaging of RNA polymerase and other components needed for early transcription in assembling virus particles.</text>
</comment>
<comment type="subunit">
    <text evidence="2">Part of the early transcription complex composed of ETF, RAP94/OPG109, and the DNA-directed RNA polymerase. Interacts (via N-terminus) with nucleoside triphosphatase I/OPG123. Interacts with OPG102. Interacts with ETF heterodimer.</text>
</comment>
<comment type="subcellular location">
    <subcellularLocation>
        <location evidence="2">Virion</location>
    </subcellularLocation>
    <text evidence="2">All the enzymes and other proteins required to synthesize early mRNAs are packaged within the virion core along with the DNA genome.</text>
</comment>
<comment type="induction">
    <text>Expressed in the late phase of the viral replicative cycle.</text>
</comment>
<comment type="domain">
    <text evidence="2">Interacts with ETF via its N-terminus and with DNA-directed RNA polymerase via its C-terminus.</text>
</comment>
<comment type="similarity">
    <text evidence="3">Belongs to the poxviridae protein RAP94 family.</text>
</comment>
<organism>
    <name type="scientific">Variola virus (isolate Human/India/Ind3/1967)</name>
    <name type="common">VARV</name>
    <name type="synonym">Smallpox virus</name>
    <dbReference type="NCBI Taxonomy" id="587200"/>
    <lineage>
        <taxon>Viruses</taxon>
        <taxon>Varidnaviria</taxon>
        <taxon>Bamfordvirae</taxon>
        <taxon>Nucleocytoviricota</taxon>
        <taxon>Pokkesviricetes</taxon>
        <taxon>Chitovirales</taxon>
        <taxon>Poxviridae</taxon>
        <taxon>Chordopoxvirinae</taxon>
        <taxon>Orthopoxvirus</taxon>
        <taxon>Variola virus</taxon>
    </lineage>
</organism>